<accession>Q01610</accession>
<reference key="1">
    <citation type="journal article" date="2000" name="Nature">
        <title>Complete genome sequence of Pseudomonas aeruginosa PAO1, an opportunistic pathogen.</title>
        <authorList>
            <person name="Stover C.K."/>
            <person name="Pham X.-Q.T."/>
            <person name="Erwin A.L."/>
            <person name="Mizoguchi S.D."/>
            <person name="Warrener P."/>
            <person name="Hickey M.J."/>
            <person name="Brinkman F.S.L."/>
            <person name="Hufnagle W.O."/>
            <person name="Kowalik D.J."/>
            <person name="Lagrou M."/>
            <person name="Garber R.L."/>
            <person name="Goltry L."/>
            <person name="Tolentino E."/>
            <person name="Westbrock-Wadman S."/>
            <person name="Yuan Y."/>
            <person name="Brody L.L."/>
            <person name="Coulter S.N."/>
            <person name="Folger K.R."/>
            <person name="Kas A."/>
            <person name="Larbig K."/>
            <person name="Lim R.M."/>
            <person name="Smith K.A."/>
            <person name="Spencer D.H."/>
            <person name="Wong G.K.-S."/>
            <person name="Wu Z."/>
            <person name="Paulsen I.T."/>
            <person name="Reizer J."/>
            <person name="Saier M.H. Jr."/>
            <person name="Hancock R.E.W."/>
            <person name="Lory S."/>
            <person name="Olson M.V."/>
        </authorList>
    </citation>
    <scope>NUCLEOTIDE SEQUENCE [LARGE SCALE GENOMIC DNA]</scope>
    <source>
        <strain>ATCC 15692 / DSM 22644 / CIP 104116 / JCM 14847 / LMG 12228 / 1C / PRS 101 / PAO1</strain>
    </source>
</reference>
<reference key="2">
    <citation type="journal article" date="1992" name="FEMS Microbiol. Lett.">
        <title>Analysis of two gene regions involved in the expression of the imipenem-specific, outer membrane porin protein OprD of Pseudomonas aeruginosa.</title>
        <authorList>
            <person name="Huang H."/>
            <person name="Siehnel R.J."/>
            <person name="Bellido F."/>
            <person name="Rawling E."/>
            <person name="Hancock R.E.W."/>
        </authorList>
    </citation>
    <scope>NUCLEOTIDE SEQUENCE [GENOMIC DNA] OF 1-249</scope>
    <source>
        <strain>ATCC 15692 / PAO1 / H103</strain>
    </source>
</reference>
<comment type="function">
    <text>May have a role in the regulation of oprD expression.</text>
</comment>
<comment type="similarity">
    <text evidence="2">Belongs to the LysR transcriptional regulatory family.</text>
</comment>
<gene>
    <name type="ordered locus">PA2220</name>
</gene>
<keyword id="KW-0238">DNA-binding</keyword>
<keyword id="KW-1185">Reference proteome</keyword>
<keyword id="KW-0804">Transcription</keyword>
<keyword id="KW-0805">Transcription regulation</keyword>
<feature type="chain" id="PRO_0000105727" description="Putative transcriptional regulator">
    <location>
        <begin position="1"/>
        <end position="306"/>
    </location>
</feature>
<feature type="domain" description="HTH lysR-type" evidence="1">
    <location>
        <begin position="1"/>
        <end position="61"/>
    </location>
</feature>
<feature type="DNA-binding region" description="H-T-H motif" evidence="1">
    <location>
        <begin position="21"/>
        <end position="40"/>
    </location>
</feature>
<sequence>MIKRNLNDLLSFVAVAREGTFTRAAAQLGVTQSALSQSISGLEARLQIRLLTRTTRSVSPTAAGERLLNAIGNRFDEIEAELDELSALRDKPSGTVRITCGDHIQRTLLLPRLTPLLLEYPDIKVEFDINYGFRDIVADRFDAGVRLGDTIDKDMIAVPIGPPVRMAVVAAPAYFAAHPKPRSPRDLVDHNCINMRMQSGGGLYAWDFQRKDRHVNVRVDGQLIFNTSPNIVDAALAGLGIAWLPEEEFAPHIEEGRLLRVLENWCPLFPGYYLYYPNRRQPSPAFSLVVDALRYTRPRGTTIGGG</sequence>
<organism>
    <name type="scientific">Pseudomonas aeruginosa (strain ATCC 15692 / DSM 22644 / CIP 104116 / JCM 14847 / LMG 12228 / 1C / PRS 101 / PAO1)</name>
    <dbReference type="NCBI Taxonomy" id="208964"/>
    <lineage>
        <taxon>Bacteria</taxon>
        <taxon>Pseudomonadati</taxon>
        <taxon>Pseudomonadota</taxon>
        <taxon>Gammaproteobacteria</taxon>
        <taxon>Pseudomonadales</taxon>
        <taxon>Pseudomonadaceae</taxon>
        <taxon>Pseudomonas</taxon>
    </lineage>
</organism>
<name>OPRR_PSEAE</name>
<proteinExistence type="inferred from homology"/>
<protein>
    <recommendedName>
        <fullName>Putative transcriptional regulator</fullName>
    </recommendedName>
</protein>
<dbReference type="EMBL" id="AE004091">
    <property type="protein sequence ID" value="AAG05608.1"/>
    <property type="molecule type" value="Genomic_DNA"/>
</dbReference>
<dbReference type="EMBL" id="Z14064">
    <property type="protein sequence ID" value="CAA78445.1"/>
    <property type="molecule type" value="Genomic_DNA"/>
</dbReference>
<dbReference type="PIR" id="A83369">
    <property type="entry name" value="A83369"/>
</dbReference>
<dbReference type="PIR" id="S23859">
    <property type="entry name" value="S23859"/>
</dbReference>
<dbReference type="RefSeq" id="NP_250910.1">
    <property type="nucleotide sequence ID" value="NC_002516.2"/>
</dbReference>
<dbReference type="RefSeq" id="WP_003113707.1">
    <property type="nucleotide sequence ID" value="NZ_QZGE01000014.1"/>
</dbReference>
<dbReference type="SMR" id="Q01610"/>
<dbReference type="FunCoup" id="Q01610">
    <property type="interactions" value="23"/>
</dbReference>
<dbReference type="STRING" id="208964.PA2220"/>
<dbReference type="PaxDb" id="208964-PA2220"/>
<dbReference type="DNASU" id="879199"/>
<dbReference type="GeneID" id="879199"/>
<dbReference type="KEGG" id="pae:PA2220"/>
<dbReference type="PATRIC" id="fig|208964.12.peg.2324"/>
<dbReference type="PseudoCAP" id="PA2220"/>
<dbReference type="HOGENOM" id="CLU_039613_16_1_6"/>
<dbReference type="InParanoid" id="Q01610"/>
<dbReference type="OrthoDB" id="9813056at2"/>
<dbReference type="PhylomeDB" id="Q01610"/>
<dbReference type="BioCyc" id="PAER208964:G1FZ6-2260-MONOMER"/>
<dbReference type="Proteomes" id="UP000002438">
    <property type="component" value="Chromosome"/>
</dbReference>
<dbReference type="GO" id="GO:0003700">
    <property type="term" value="F:DNA-binding transcription factor activity"/>
    <property type="evidence" value="ECO:0000318"/>
    <property type="project" value="GO_Central"/>
</dbReference>
<dbReference type="GO" id="GO:0043565">
    <property type="term" value="F:sequence-specific DNA binding"/>
    <property type="evidence" value="ECO:0000318"/>
    <property type="project" value="GO_Central"/>
</dbReference>
<dbReference type="GO" id="GO:0006351">
    <property type="term" value="P:DNA-templated transcription"/>
    <property type="evidence" value="ECO:0000318"/>
    <property type="project" value="GO_Central"/>
</dbReference>
<dbReference type="CDD" id="cd08474">
    <property type="entry name" value="PBP2_CrgA_like_5"/>
    <property type="match status" value="1"/>
</dbReference>
<dbReference type="FunFam" id="1.10.10.10:FF:000001">
    <property type="entry name" value="LysR family transcriptional regulator"/>
    <property type="match status" value="1"/>
</dbReference>
<dbReference type="FunFam" id="3.40.190.290:FF:000012">
    <property type="entry name" value="Transcriptional regulator, LysR family"/>
    <property type="match status" value="1"/>
</dbReference>
<dbReference type="Gene3D" id="3.40.190.290">
    <property type="match status" value="1"/>
</dbReference>
<dbReference type="Gene3D" id="1.10.10.10">
    <property type="entry name" value="Winged helix-like DNA-binding domain superfamily/Winged helix DNA-binding domain"/>
    <property type="match status" value="1"/>
</dbReference>
<dbReference type="InterPro" id="IPR005119">
    <property type="entry name" value="LysR_subst-bd"/>
</dbReference>
<dbReference type="InterPro" id="IPR000847">
    <property type="entry name" value="Tscrpt_reg_HTH_LysR"/>
</dbReference>
<dbReference type="InterPro" id="IPR036388">
    <property type="entry name" value="WH-like_DNA-bd_sf"/>
</dbReference>
<dbReference type="InterPro" id="IPR036390">
    <property type="entry name" value="WH_DNA-bd_sf"/>
</dbReference>
<dbReference type="PANTHER" id="PTHR30537">
    <property type="entry name" value="HTH-TYPE TRANSCRIPTIONAL REGULATOR"/>
    <property type="match status" value="1"/>
</dbReference>
<dbReference type="PANTHER" id="PTHR30537:SF1">
    <property type="entry name" value="HTH-TYPE TRANSCRIPTIONAL REGULATOR PGRR"/>
    <property type="match status" value="1"/>
</dbReference>
<dbReference type="Pfam" id="PF00126">
    <property type="entry name" value="HTH_1"/>
    <property type="match status" value="1"/>
</dbReference>
<dbReference type="Pfam" id="PF03466">
    <property type="entry name" value="LysR_substrate"/>
    <property type="match status" value="1"/>
</dbReference>
<dbReference type="PRINTS" id="PR00039">
    <property type="entry name" value="HTHLYSR"/>
</dbReference>
<dbReference type="SUPFAM" id="SSF53850">
    <property type="entry name" value="Periplasmic binding protein-like II"/>
    <property type="match status" value="1"/>
</dbReference>
<dbReference type="SUPFAM" id="SSF46785">
    <property type="entry name" value="Winged helix' DNA-binding domain"/>
    <property type="match status" value="1"/>
</dbReference>
<dbReference type="PROSITE" id="PS50931">
    <property type="entry name" value="HTH_LYSR"/>
    <property type="match status" value="1"/>
</dbReference>
<evidence type="ECO:0000255" key="1">
    <source>
        <dbReference type="PROSITE-ProRule" id="PRU00253"/>
    </source>
</evidence>
<evidence type="ECO:0000305" key="2"/>